<proteinExistence type="evidence at protein level"/>
<dbReference type="EC" id="5.6.2.2" evidence="1"/>
<dbReference type="EMBL" id="X53555">
    <property type="protein sequence ID" value="CAA37622.1"/>
    <property type="molecule type" value="Genomic_DNA"/>
</dbReference>
<dbReference type="EMBL" id="U00089">
    <property type="protein sequence ID" value="AAB95799.1"/>
    <property type="molecule type" value="Genomic_DNA"/>
</dbReference>
<dbReference type="EMBL" id="U34816">
    <property type="protein sequence ID" value="AAC43643.1"/>
    <property type="molecule type" value="Genomic_DNA"/>
</dbReference>
<dbReference type="PIR" id="S11767">
    <property type="entry name" value="ISYMBP"/>
</dbReference>
<dbReference type="RefSeq" id="NP_109691.1">
    <property type="nucleotide sequence ID" value="NC_000912.1"/>
</dbReference>
<dbReference type="RefSeq" id="WP_010874360.1">
    <property type="nucleotide sequence ID" value="NZ_OU342337.1"/>
</dbReference>
<dbReference type="SMR" id="P22447"/>
<dbReference type="IntAct" id="P22447">
    <property type="interactions" value="5"/>
</dbReference>
<dbReference type="STRING" id="272634.MPN_003"/>
<dbReference type="EnsemblBacteria" id="AAB95799">
    <property type="protein sequence ID" value="AAB95799"/>
    <property type="gene ID" value="MPN_003"/>
</dbReference>
<dbReference type="GeneID" id="66609358"/>
<dbReference type="KEGG" id="mpn:MPN_003"/>
<dbReference type="PATRIC" id="fig|272634.6.peg.3"/>
<dbReference type="HOGENOM" id="CLU_006146_4_1_14"/>
<dbReference type="OrthoDB" id="9802808at2"/>
<dbReference type="BioCyc" id="MPNE272634:G1GJ3-6-MONOMER"/>
<dbReference type="Proteomes" id="UP000000808">
    <property type="component" value="Chromosome"/>
</dbReference>
<dbReference type="GO" id="GO:0005694">
    <property type="term" value="C:chromosome"/>
    <property type="evidence" value="ECO:0007669"/>
    <property type="project" value="InterPro"/>
</dbReference>
<dbReference type="GO" id="GO:0005737">
    <property type="term" value="C:cytoplasm"/>
    <property type="evidence" value="ECO:0007669"/>
    <property type="project" value="UniProtKB-SubCell"/>
</dbReference>
<dbReference type="GO" id="GO:0005524">
    <property type="term" value="F:ATP binding"/>
    <property type="evidence" value="ECO:0007669"/>
    <property type="project" value="UniProtKB-UniRule"/>
</dbReference>
<dbReference type="GO" id="GO:0003677">
    <property type="term" value="F:DNA binding"/>
    <property type="evidence" value="ECO:0007669"/>
    <property type="project" value="UniProtKB-KW"/>
</dbReference>
<dbReference type="GO" id="GO:0034335">
    <property type="term" value="F:DNA negative supercoiling activity"/>
    <property type="evidence" value="ECO:0007669"/>
    <property type="project" value="UniProtKB-ARBA"/>
</dbReference>
<dbReference type="GO" id="GO:0046872">
    <property type="term" value="F:metal ion binding"/>
    <property type="evidence" value="ECO:0007669"/>
    <property type="project" value="UniProtKB-KW"/>
</dbReference>
<dbReference type="GO" id="GO:0006265">
    <property type="term" value="P:DNA topological change"/>
    <property type="evidence" value="ECO:0007669"/>
    <property type="project" value="UniProtKB-UniRule"/>
</dbReference>
<dbReference type="GO" id="GO:0006261">
    <property type="term" value="P:DNA-templated DNA replication"/>
    <property type="evidence" value="ECO:0007669"/>
    <property type="project" value="UniProtKB-UniRule"/>
</dbReference>
<dbReference type="CDD" id="cd16928">
    <property type="entry name" value="HATPase_GyrB-like"/>
    <property type="match status" value="1"/>
</dbReference>
<dbReference type="CDD" id="cd00822">
    <property type="entry name" value="TopoII_Trans_DNA_gyrase"/>
    <property type="match status" value="1"/>
</dbReference>
<dbReference type="CDD" id="cd03366">
    <property type="entry name" value="TOPRIM_TopoIIA_GyrB"/>
    <property type="match status" value="1"/>
</dbReference>
<dbReference type="FunFam" id="3.30.230.10:FF:000005">
    <property type="entry name" value="DNA gyrase subunit B"/>
    <property type="match status" value="1"/>
</dbReference>
<dbReference type="FunFam" id="3.30.565.10:FF:000002">
    <property type="entry name" value="DNA gyrase subunit B"/>
    <property type="match status" value="1"/>
</dbReference>
<dbReference type="FunFam" id="3.40.50.670:FF:000002">
    <property type="entry name" value="DNA gyrase subunit B"/>
    <property type="match status" value="1"/>
</dbReference>
<dbReference type="Gene3D" id="3.30.230.10">
    <property type="match status" value="1"/>
</dbReference>
<dbReference type="Gene3D" id="3.40.50.670">
    <property type="match status" value="1"/>
</dbReference>
<dbReference type="Gene3D" id="3.30.565.10">
    <property type="entry name" value="Histidine kinase-like ATPase, C-terminal domain"/>
    <property type="match status" value="1"/>
</dbReference>
<dbReference type="HAMAP" id="MF_01898">
    <property type="entry name" value="GyrB"/>
    <property type="match status" value="1"/>
</dbReference>
<dbReference type="InterPro" id="IPR002288">
    <property type="entry name" value="DNA_gyrase_B_C"/>
</dbReference>
<dbReference type="InterPro" id="IPR011557">
    <property type="entry name" value="GyrB"/>
</dbReference>
<dbReference type="InterPro" id="IPR036890">
    <property type="entry name" value="HATPase_C_sf"/>
</dbReference>
<dbReference type="InterPro" id="IPR020568">
    <property type="entry name" value="Ribosomal_Su5_D2-typ_SF"/>
</dbReference>
<dbReference type="InterPro" id="IPR014721">
    <property type="entry name" value="Ribsml_uS5_D2-typ_fold_subgr"/>
</dbReference>
<dbReference type="InterPro" id="IPR001241">
    <property type="entry name" value="Topo_IIA"/>
</dbReference>
<dbReference type="InterPro" id="IPR013760">
    <property type="entry name" value="Topo_IIA-like_dom_sf"/>
</dbReference>
<dbReference type="InterPro" id="IPR000565">
    <property type="entry name" value="Topo_IIA_B"/>
</dbReference>
<dbReference type="InterPro" id="IPR013759">
    <property type="entry name" value="Topo_IIA_B_C"/>
</dbReference>
<dbReference type="InterPro" id="IPR013506">
    <property type="entry name" value="Topo_IIA_bsu_dom2"/>
</dbReference>
<dbReference type="InterPro" id="IPR018522">
    <property type="entry name" value="TopoIIA_CS"/>
</dbReference>
<dbReference type="InterPro" id="IPR006171">
    <property type="entry name" value="TOPRIM_dom"/>
</dbReference>
<dbReference type="InterPro" id="IPR034160">
    <property type="entry name" value="TOPRIM_GyrB"/>
</dbReference>
<dbReference type="NCBIfam" id="TIGR01059">
    <property type="entry name" value="gyrB"/>
    <property type="match status" value="1"/>
</dbReference>
<dbReference type="NCBIfam" id="NF004189">
    <property type="entry name" value="PRK05644.1"/>
    <property type="match status" value="1"/>
</dbReference>
<dbReference type="NCBIfam" id="NF011501">
    <property type="entry name" value="PRK14939.1"/>
    <property type="match status" value="1"/>
</dbReference>
<dbReference type="PANTHER" id="PTHR45866:SF1">
    <property type="entry name" value="DNA GYRASE SUBUNIT B, MITOCHONDRIAL"/>
    <property type="match status" value="1"/>
</dbReference>
<dbReference type="PANTHER" id="PTHR45866">
    <property type="entry name" value="DNA GYRASE/TOPOISOMERASE SUBUNIT B"/>
    <property type="match status" value="1"/>
</dbReference>
<dbReference type="Pfam" id="PF00204">
    <property type="entry name" value="DNA_gyraseB"/>
    <property type="match status" value="1"/>
</dbReference>
<dbReference type="Pfam" id="PF00986">
    <property type="entry name" value="DNA_gyraseB_C"/>
    <property type="match status" value="1"/>
</dbReference>
<dbReference type="Pfam" id="PF02518">
    <property type="entry name" value="HATPase_c"/>
    <property type="match status" value="1"/>
</dbReference>
<dbReference type="Pfam" id="PF01751">
    <property type="entry name" value="Toprim"/>
    <property type="match status" value="1"/>
</dbReference>
<dbReference type="PRINTS" id="PR01159">
    <property type="entry name" value="DNAGYRASEB"/>
</dbReference>
<dbReference type="PRINTS" id="PR00418">
    <property type="entry name" value="TPI2FAMILY"/>
</dbReference>
<dbReference type="SMART" id="SM00387">
    <property type="entry name" value="HATPase_c"/>
    <property type="match status" value="1"/>
</dbReference>
<dbReference type="SMART" id="SM00433">
    <property type="entry name" value="TOP2c"/>
    <property type="match status" value="1"/>
</dbReference>
<dbReference type="SUPFAM" id="SSF55874">
    <property type="entry name" value="ATPase domain of HSP90 chaperone/DNA topoisomerase II/histidine kinase"/>
    <property type="match status" value="1"/>
</dbReference>
<dbReference type="SUPFAM" id="SSF54211">
    <property type="entry name" value="Ribosomal protein S5 domain 2-like"/>
    <property type="match status" value="1"/>
</dbReference>
<dbReference type="SUPFAM" id="SSF56719">
    <property type="entry name" value="Type II DNA topoisomerase"/>
    <property type="match status" value="1"/>
</dbReference>
<dbReference type="PROSITE" id="PS00177">
    <property type="entry name" value="TOPOISOMERASE_II"/>
    <property type="match status" value="1"/>
</dbReference>
<dbReference type="PROSITE" id="PS50880">
    <property type="entry name" value="TOPRIM"/>
    <property type="match status" value="1"/>
</dbReference>
<keyword id="KW-0067">ATP-binding</keyword>
<keyword id="KW-0963">Cytoplasm</keyword>
<keyword id="KW-0238">DNA-binding</keyword>
<keyword id="KW-0413">Isomerase</keyword>
<keyword id="KW-0460">Magnesium</keyword>
<keyword id="KW-0479">Metal-binding</keyword>
<keyword id="KW-0547">Nucleotide-binding</keyword>
<keyword id="KW-1185">Reference proteome</keyword>
<keyword id="KW-0799">Topoisomerase</keyword>
<protein>
    <recommendedName>
        <fullName evidence="1">DNA gyrase subunit B</fullName>
        <ecNumber evidence="1">5.6.2.2</ecNumber>
    </recommendedName>
</protein>
<evidence type="ECO:0000255" key="1">
    <source>
        <dbReference type="HAMAP-Rule" id="MF_01898"/>
    </source>
</evidence>
<evidence type="ECO:0000256" key="2">
    <source>
        <dbReference type="SAM" id="MobiDB-lite"/>
    </source>
</evidence>
<sequence>MEDNNKTQAYDSSSIKILEGLEAVRKRPGMYIGSTGEEGLHHMIWEIIDNSIDEAMGGFASTVKLTLKDNFVTIVEDDGRGIPVDIHPKTNRSTVETVFTVLHAGGKFDNDSYKVSGGLHGVGASVVNALSSSFKVWVAREHQQYFLAFHNGGEVIGDLVNEGKCDKEHGTKVEFVPDFTVMEKSDYKQTVIASRLQQLAFLNKGIQIDFVDERRQNPQSFSWKYDGGLVQYIHHLNNEKEPLFEDIIFGEKTDTVKSVSRDESYTIKVEVAFQYNKTYNQSIFSFCNNINTTEGGTHVEGFRNALVKIINRFAVENKFLKETDEKITRDDICEGLTAIISIKHPNPQYEGQTKKKLGNTEVRPLVNSIVSEIFERFMLENPQEANAIIRKTLLAQEARRRSQEARELTRRKSPFDSGSLPGKLADCTTRDPSISELYIVEGDSAGGTAKTGRDRYFQAILPLRGKILNVEKSHFEQIFNNVEISALVMAVGCGIKPDFELEKLRYNKIIIMTDADVDGAHIRTLLLTFFFRFMYPLVEQGNIYIAQPPLYKVSYSNKDLYMQTDVQLEEWKQQHPNLKYNLQRYKGLGEMDAIQLWETTMDPKVRTLLKVTVEDASIADKAFSLLMGDEVPPRREFIEQNARNVKNIDI</sequence>
<reference key="1">
    <citation type="journal article" date="1990" name="Mol. Microbiol.">
        <title>Mycoplasma pneumoniae DNA gyrase genes.</title>
        <authorList>
            <person name="Colman S.D."/>
            <person name="Hu P.C."/>
            <person name="Bott K.F."/>
        </authorList>
    </citation>
    <scope>NUCLEOTIDE SEQUENCE [GENOMIC DNA]</scope>
</reference>
<reference key="2">
    <citation type="journal article" date="1996" name="Nucleic Acids Res.">
        <title>Complete sequence analysis of the genome of the bacterium Mycoplasma pneumoniae.</title>
        <authorList>
            <person name="Himmelreich R."/>
            <person name="Hilbert H."/>
            <person name="Plagens H."/>
            <person name="Pirkl E."/>
            <person name="Li B.-C."/>
            <person name="Herrmann R."/>
        </authorList>
    </citation>
    <scope>NUCLEOTIDE SEQUENCE [LARGE SCALE GENOMIC DNA]</scope>
    <source>
        <strain>ATCC 29342 / M129 / Subtype 1</strain>
    </source>
</reference>
<reference key="3">
    <citation type="journal article" date="1996" name="Nucleic Acids Res.">
        <title>Sequence analysis of 56 kb from the genome of the bacterium Mycoplasma pneumoniae comprising the dnaA region, the atp operon and a cluster of ribosomal protein genes.</title>
        <authorList>
            <person name="Hilbert H."/>
            <person name="Himmelreich R."/>
            <person name="Plagens H."/>
            <person name="Herrmann R."/>
        </authorList>
    </citation>
    <scope>NUCLEOTIDE SEQUENCE [GENOMIC DNA] OF 1-637</scope>
    <source>
        <strain>ATCC 29342 / M129 / Subtype 1</strain>
    </source>
</reference>
<reference key="4">
    <citation type="journal article" date="2000" name="Electrophoresis">
        <title>Towards a two-dimensional proteome map of Mycoplasma pneumoniae.</title>
        <authorList>
            <person name="Regula J.T."/>
            <person name="Ueberle B."/>
            <person name="Boguth G."/>
            <person name="Goerg A."/>
            <person name="Schnoelzer M."/>
            <person name="Herrmann R."/>
            <person name="Frank R."/>
        </authorList>
    </citation>
    <scope>IDENTIFICATION BY MASS SPECTROMETRY</scope>
    <source>
        <strain>ATCC 29342 / M129 / Subtype 1</strain>
    </source>
</reference>
<organism>
    <name type="scientific">Mycoplasma pneumoniae (strain ATCC 29342 / M129 / Subtype 1)</name>
    <name type="common">Mycoplasmoides pneumoniae</name>
    <dbReference type="NCBI Taxonomy" id="272634"/>
    <lineage>
        <taxon>Bacteria</taxon>
        <taxon>Bacillati</taxon>
        <taxon>Mycoplasmatota</taxon>
        <taxon>Mycoplasmoidales</taxon>
        <taxon>Mycoplasmoidaceae</taxon>
        <taxon>Mycoplasmoides</taxon>
    </lineage>
</organism>
<name>GYRB_MYCPN</name>
<feature type="chain" id="PRO_0000145323" description="DNA gyrase subunit B">
    <location>
        <begin position="1"/>
        <end position="650"/>
    </location>
</feature>
<feature type="domain" description="Toprim" evidence="1">
    <location>
        <begin position="435"/>
        <end position="549"/>
    </location>
</feature>
<feature type="region of interest" description="Disordered" evidence="2">
    <location>
        <begin position="400"/>
        <end position="422"/>
    </location>
</feature>
<feature type="compositionally biased region" description="Basic and acidic residues" evidence="2">
    <location>
        <begin position="400"/>
        <end position="414"/>
    </location>
</feature>
<feature type="binding site" evidence="1">
    <location>
        <position position="441"/>
    </location>
    <ligand>
        <name>Mg(2+)</name>
        <dbReference type="ChEBI" id="CHEBI:18420"/>
        <label>1</label>
        <note>catalytic</note>
    </ligand>
</feature>
<feature type="binding site" evidence="1">
    <location>
        <position position="514"/>
    </location>
    <ligand>
        <name>Mg(2+)</name>
        <dbReference type="ChEBI" id="CHEBI:18420"/>
        <label>1</label>
        <note>catalytic</note>
    </ligand>
</feature>
<feature type="binding site" evidence="1">
    <location>
        <position position="514"/>
    </location>
    <ligand>
        <name>Mg(2+)</name>
        <dbReference type="ChEBI" id="CHEBI:18420"/>
        <label>2</label>
    </ligand>
</feature>
<feature type="binding site" evidence="1">
    <location>
        <position position="516"/>
    </location>
    <ligand>
        <name>Mg(2+)</name>
        <dbReference type="ChEBI" id="CHEBI:18420"/>
        <label>2</label>
    </ligand>
</feature>
<feature type="site" description="Interaction with DNA" evidence="1">
    <location>
        <position position="466"/>
    </location>
</feature>
<feature type="site" description="Interaction with DNA" evidence="1">
    <location>
        <position position="469"/>
    </location>
</feature>
<gene>
    <name evidence="1" type="primary">gyrB</name>
    <name type="ordered locus">MPN_003</name>
    <name type="ORF">MP151</name>
</gene>
<comment type="function">
    <text evidence="1">A type II topoisomerase that negatively supercoils closed circular double-stranded (ds) DNA in an ATP-dependent manner to modulate DNA topology and maintain chromosomes in an underwound state. Negative supercoiling favors strand separation, and DNA replication, transcription, recombination and repair, all of which involve strand separation. Also able to catalyze the interconversion of other topological isomers of dsDNA rings, including catenanes and knotted rings. Type II topoisomerases break and join 2 DNA strands simultaneously in an ATP-dependent manner.</text>
</comment>
<comment type="catalytic activity">
    <reaction evidence="1">
        <text>ATP-dependent breakage, passage and rejoining of double-stranded DNA.</text>
        <dbReference type="EC" id="5.6.2.2"/>
    </reaction>
</comment>
<comment type="cofactor">
    <cofactor evidence="1">
        <name>Mg(2+)</name>
        <dbReference type="ChEBI" id="CHEBI:18420"/>
    </cofactor>
    <cofactor evidence="1">
        <name>Mn(2+)</name>
        <dbReference type="ChEBI" id="CHEBI:29035"/>
    </cofactor>
    <cofactor evidence="1">
        <name>Ca(2+)</name>
        <dbReference type="ChEBI" id="CHEBI:29108"/>
    </cofactor>
    <text evidence="1">Binds two Mg(2+) per subunit. The magnesium ions form salt bridges with both the protein and the DNA. Can also accept other divalent metal cations, such as Mn(2+) or Ca(2+).</text>
</comment>
<comment type="subunit">
    <text evidence="1">Heterotetramer, composed of two GyrA and two GyrB chains. In the heterotetramer, GyrA contains the active site tyrosine that forms a transient covalent intermediate with DNA, while GyrB binds cofactors and catalyzes ATP hydrolysis.</text>
</comment>
<comment type="subcellular location">
    <subcellularLocation>
        <location evidence="1">Cytoplasm</location>
    </subcellularLocation>
</comment>
<comment type="miscellaneous">
    <text evidence="1">Few gyrases are as efficient as E.coli at forming negative supercoils. Not all organisms have 2 type II topoisomerases; in organisms with a single type II topoisomerase this enzyme also has to decatenate newly replicated chromosomes.</text>
</comment>
<comment type="similarity">
    <text evidence="1">Belongs to the type II topoisomerase GyrB family.</text>
</comment>
<accession>P22447</accession>